<evidence type="ECO:0000255" key="1"/>
<evidence type="ECO:0000255" key="2">
    <source>
        <dbReference type="PROSITE-ProRule" id="PRU00521"/>
    </source>
</evidence>
<evidence type="ECO:0000269" key="3">
    <source>
    </source>
</evidence>
<evidence type="ECO:0000305" key="4"/>
<gene>
    <name type="primary">OR2A25</name>
    <name type="synonym">OR2A25P</name>
    <name type="synonym">OR2A27</name>
</gene>
<reference key="1">
    <citation type="journal article" date="2003" name="Nature">
        <title>The DNA sequence of human chromosome 7.</title>
        <authorList>
            <person name="Hillier L.W."/>
            <person name="Fulton R.S."/>
            <person name="Fulton L.A."/>
            <person name="Graves T.A."/>
            <person name="Pepin K.H."/>
            <person name="Wagner-McPherson C."/>
            <person name="Layman D."/>
            <person name="Maas J."/>
            <person name="Jaeger S."/>
            <person name="Walker R."/>
            <person name="Wylie K."/>
            <person name="Sekhon M."/>
            <person name="Becker M.C."/>
            <person name="O'Laughlin M.D."/>
            <person name="Schaller M.E."/>
            <person name="Fewell G.A."/>
            <person name="Delehaunty K.D."/>
            <person name="Miner T.L."/>
            <person name="Nash W.E."/>
            <person name="Cordes M."/>
            <person name="Du H."/>
            <person name="Sun H."/>
            <person name="Edwards J."/>
            <person name="Bradshaw-Cordum H."/>
            <person name="Ali J."/>
            <person name="Andrews S."/>
            <person name="Isak A."/>
            <person name="Vanbrunt A."/>
            <person name="Nguyen C."/>
            <person name="Du F."/>
            <person name="Lamar B."/>
            <person name="Courtney L."/>
            <person name="Kalicki J."/>
            <person name="Ozersky P."/>
            <person name="Bielicki L."/>
            <person name="Scott K."/>
            <person name="Holmes A."/>
            <person name="Harkins R."/>
            <person name="Harris A."/>
            <person name="Strong C.M."/>
            <person name="Hou S."/>
            <person name="Tomlinson C."/>
            <person name="Dauphin-Kohlberg S."/>
            <person name="Kozlowicz-Reilly A."/>
            <person name="Leonard S."/>
            <person name="Rohlfing T."/>
            <person name="Rock S.M."/>
            <person name="Tin-Wollam A.-M."/>
            <person name="Abbott A."/>
            <person name="Minx P."/>
            <person name="Maupin R."/>
            <person name="Strowmatt C."/>
            <person name="Latreille P."/>
            <person name="Miller N."/>
            <person name="Johnson D."/>
            <person name="Murray J."/>
            <person name="Woessner J.P."/>
            <person name="Wendl M.C."/>
            <person name="Yang S.-P."/>
            <person name="Schultz B.R."/>
            <person name="Wallis J.W."/>
            <person name="Spieth J."/>
            <person name="Bieri T.A."/>
            <person name="Nelson J.O."/>
            <person name="Berkowicz N."/>
            <person name="Wohldmann P.E."/>
            <person name="Cook L.L."/>
            <person name="Hickenbotham M.T."/>
            <person name="Eldred J."/>
            <person name="Williams D."/>
            <person name="Bedell J.A."/>
            <person name="Mardis E.R."/>
            <person name="Clifton S.W."/>
            <person name="Chissoe S.L."/>
            <person name="Marra M.A."/>
            <person name="Raymond C."/>
            <person name="Haugen E."/>
            <person name="Gillett W."/>
            <person name="Zhou Y."/>
            <person name="James R."/>
            <person name="Phelps K."/>
            <person name="Iadanoto S."/>
            <person name="Bubb K."/>
            <person name="Simms E."/>
            <person name="Levy R."/>
            <person name="Clendenning J."/>
            <person name="Kaul R."/>
            <person name="Kent W.J."/>
            <person name="Furey T.S."/>
            <person name="Baertsch R.A."/>
            <person name="Brent M.R."/>
            <person name="Keibler E."/>
            <person name="Flicek P."/>
            <person name="Bork P."/>
            <person name="Suyama M."/>
            <person name="Bailey J.A."/>
            <person name="Portnoy M.E."/>
            <person name="Torrents D."/>
            <person name="Chinwalla A.T."/>
            <person name="Gish W.R."/>
            <person name="Eddy S.R."/>
            <person name="McPherson J.D."/>
            <person name="Olson M.V."/>
            <person name="Eichler E.E."/>
            <person name="Green E.D."/>
            <person name="Waterston R.H."/>
            <person name="Wilson R.K."/>
        </authorList>
    </citation>
    <scope>NUCLEOTIDE SEQUENCE [LARGE SCALE GENOMIC DNA]</scope>
</reference>
<reference key="2">
    <citation type="journal article" date="2003" name="Science">
        <title>Human chromosome 7: DNA sequence and biology.</title>
        <authorList>
            <person name="Scherer S.W."/>
            <person name="Cheung J."/>
            <person name="MacDonald J.R."/>
            <person name="Osborne L.R."/>
            <person name="Nakabayashi K."/>
            <person name="Herbrick J.-A."/>
            <person name="Carson A.R."/>
            <person name="Parker-Katiraee L."/>
            <person name="Skaug J."/>
            <person name="Khaja R."/>
            <person name="Zhang J."/>
            <person name="Hudek A.K."/>
            <person name="Li M."/>
            <person name="Haddad M."/>
            <person name="Duggan G.E."/>
            <person name="Fernandez B.A."/>
            <person name="Kanematsu E."/>
            <person name="Gentles S."/>
            <person name="Christopoulos C.C."/>
            <person name="Choufani S."/>
            <person name="Kwasnicka D."/>
            <person name="Zheng X.H."/>
            <person name="Lai Z."/>
            <person name="Nusskern D.R."/>
            <person name="Zhang Q."/>
            <person name="Gu Z."/>
            <person name="Lu F."/>
            <person name="Zeesman S."/>
            <person name="Nowaczyk M.J."/>
            <person name="Teshima I."/>
            <person name="Chitayat D."/>
            <person name="Shuman C."/>
            <person name="Weksberg R."/>
            <person name="Zackai E.H."/>
            <person name="Grebe T.A."/>
            <person name="Cox S.R."/>
            <person name="Kirkpatrick S.J."/>
            <person name="Rahman N."/>
            <person name="Friedman J.M."/>
            <person name="Heng H.H.Q."/>
            <person name="Pelicci P.G."/>
            <person name="Lo-Coco F."/>
            <person name="Belloni E."/>
            <person name="Shaffer L.G."/>
            <person name="Pober B."/>
            <person name="Morton C.C."/>
            <person name="Gusella J.F."/>
            <person name="Bruns G.A.P."/>
            <person name="Korf B.R."/>
            <person name="Quade B.J."/>
            <person name="Ligon A.H."/>
            <person name="Ferguson H."/>
            <person name="Higgins A.W."/>
            <person name="Leach N.T."/>
            <person name="Herrick S.R."/>
            <person name="Lemyre E."/>
            <person name="Farra C.G."/>
            <person name="Kim H.-G."/>
            <person name="Summers A.M."/>
            <person name="Gripp K.W."/>
            <person name="Roberts W."/>
            <person name="Szatmari P."/>
            <person name="Winsor E.J.T."/>
            <person name="Grzeschik K.-H."/>
            <person name="Teebi A."/>
            <person name="Minassian B.A."/>
            <person name="Kere J."/>
            <person name="Armengol L."/>
            <person name="Pujana M.A."/>
            <person name="Estivill X."/>
            <person name="Wilson M.D."/>
            <person name="Koop B.F."/>
            <person name="Tosi S."/>
            <person name="Moore G.E."/>
            <person name="Boright A.P."/>
            <person name="Zlotorynski E."/>
            <person name="Kerem B."/>
            <person name="Kroisel P.M."/>
            <person name="Petek E."/>
            <person name="Oscier D.G."/>
            <person name="Mould S.J."/>
            <person name="Doehner H."/>
            <person name="Doehner K."/>
            <person name="Rommens J.M."/>
            <person name="Vincent J.B."/>
            <person name="Venter J.C."/>
            <person name="Li P.W."/>
            <person name="Mural R.J."/>
            <person name="Adams M.D."/>
            <person name="Tsui L.-C."/>
        </authorList>
    </citation>
    <scope>NUCLEOTIDE SEQUENCE [LARGE SCALE GENOMIC DNA]</scope>
    <scope>VARIANTS ASN-75 AND PRO-209</scope>
</reference>
<reference key="3">
    <citation type="journal article" date="2004" name="Genome Res.">
        <title>The status, quality, and expansion of the NIH full-length cDNA project: the Mammalian Gene Collection (MGC).</title>
        <authorList>
            <consortium name="The MGC Project Team"/>
        </authorList>
    </citation>
    <scope>NUCLEOTIDE SEQUENCE [LARGE SCALE MRNA]</scope>
</reference>
<name>O2A25_HUMAN</name>
<organism>
    <name type="scientific">Homo sapiens</name>
    <name type="common">Human</name>
    <dbReference type="NCBI Taxonomy" id="9606"/>
    <lineage>
        <taxon>Eukaryota</taxon>
        <taxon>Metazoa</taxon>
        <taxon>Chordata</taxon>
        <taxon>Craniata</taxon>
        <taxon>Vertebrata</taxon>
        <taxon>Euteleostomi</taxon>
        <taxon>Mammalia</taxon>
        <taxon>Eutheria</taxon>
        <taxon>Euarchontoglires</taxon>
        <taxon>Primates</taxon>
        <taxon>Haplorrhini</taxon>
        <taxon>Catarrhini</taxon>
        <taxon>Hominidae</taxon>
        <taxon>Homo</taxon>
    </lineage>
</organism>
<feature type="chain" id="PRO_0000293718" description="Olfactory receptor 2A25">
    <location>
        <begin position="1"/>
        <end position="310"/>
    </location>
</feature>
<feature type="topological domain" description="Extracellular" evidence="1">
    <location>
        <begin position="1"/>
        <end position="24"/>
    </location>
</feature>
<feature type="transmembrane region" description="Helical; Name=1" evidence="1">
    <location>
        <begin position="25"/>
        <end position="48"/>
    </location>
</feature>
<feature type="topological domain" description="Cytoplasmic" evidence="1">
    <location>
        <begin position="49"/>
        <end position="56"/>
    </location>
</feature>
<feature type="transmembrane region" description="Helical; Name=2" evidence="1">
    <location>
        <begin position="57"/>
        <end position="78"/>
    </location>
</feature>
<feature type="topological domain" description="Extracellular" evidence="1">
    <location>
        <begin position="79"/>
        <end position="99"/>
    </location>
</feature>
<feature type="transmembrane region" description="Helical; Name=3" evidence="1">
    <location>
        <begin position="100"/>
        <end position="119"/>
    </location>
</feature>
<feature type="topological domain" description="Cytoplasmic" evidence="1">
    <location>
        <begin position="120"/>
        <end position="138"/>
    </location>
</feature>
<feature type="transmembrane region" description="Helical; Name=4" evidence="1">
    <location>
        <begin position="139"/>
        <end position="157"/>
    </location>
</feature>
<feature type="topological domain" description="Extracellular" evidence="1">
    <location>
        <begin position="158"/>
        <end position="195"/>
    </location>
</feature>
<feature type="transmembrane region" description="Helical; Name=5" evidence="1">
    <location>
        <begin position="196"/>
        <end position="218"/>
    </location>
</feature>
<feature type="topological domain" description="Cytoplasmic" evidence="1">
    <location>
        <begin position="219"/>
        <end position="235"/>
    </location>
</feature>
<feature type="transmembrane region" description="Helical; Name=6" evidence="1">
    <location>
        <begin position="236"/>
        <end position="258"/>
    </location>
</feature>
<feature type="topological domain" description="Extracellular" evidence="1">
    <location>
        <begin position="259"/>
        <end position="271"/>
    </location>
</feature>
<feature type="transmembrane region" description="Helical; Name=7" evidence="1">
    <location>
        <begin position="272"/>
        <end position="291"/>
    </location>
</feature>
<feature type="topological domain" description="Cytoplasmic" evidence="1">
    <location>
        <begin position="292"/>
        <end position="310"/>
    </location>
</feature>
<feature type="glycosylation site" description="N-linked (GlcNAc...) asparagine" evidence="1">
    <location>
        <position position="4"/>
    </location>
</feature>
<feature type="disulfide bond" evidence="2">
    <location>
        <begin position="96"/>
        <end position="188"/>
    </location>
</feature>
<feature type="sequence variant" id="VAR_054664" description="In dbSNP:rs6951485." evidence="3">
    <original>S</original>
    <variation>N</variation>
    <location>
        <position position="75"/>
    </location>
</feature>
<feature type="sequence variant" id="VAR_054665" description="In dbSNP:rs2961135." evidence="3">
    <original>A</original>
    <variation>P</variation>
    <location>
        <position position="209"/>
    </location>
</feature>
<accession>A4D2G3</accession>
<accession>B2RNC9</accession>
<proteinExistence type="evidence at transcript level"/>
<dbReference type="EMBL" id="AC091768">
    <property type="status" value="NOT_ANNOTATED_CDS"/>
    <property type="molecule type" value="Genomic_DNA"/>
</dbReference>
<dbReference type="EMBL" id="CH236959">
    <property type="protein sequence ID" value="EAL23797.1"/>
    <property type="molecule type" value="Genomic_DNA"/>
</dbReference>
<dbReference type="EMBL" id="BC136814">
    <property type="protein sequence ID" value="AAI36815.1"/>
    <property type="molecule type" value="mRNA"/>
</dbReference>
<dbReference type="EMBL" id="BC136829">
    <property type="protein sequence ID" value="AAI36830.1"/>
    <property type="molecule type" value="mRNA"/>
</dbReference>
<dbReference type="CCDS" id="CCDS43669.1"/>
<dbReference type="RefSeq" id="NP_001004488.1">
    <property type="nucleotide sequence ID" value="NM_001004488.2"/>
</dbReference>
<dbReference type="RefSeq" id="NP_001373025.1">
    <property type="nucleotide sequence ID" value="NM_001386096.1"/>
</dbReference>
<dbReference type="SMR" id="A4D2G3"/>
<dbReference type="BioGRID" id="134111">
    <property type="interactions" value="1"/>
</dbReference>
<dbReference type="FunCoup" id="A4D2G3">
    <property type="interactions" value="460"/>
</dbReference>
<dbReference type="IntAct" id="A4D2G3">
    <property type="interactions" value="1"/>
</dbReference>
<dbReference type="STRING" id="9606.ENSP00000493343"/>
<dbReference type="GlyCosmos" id="A4D2G3">
    <property type="glycosylation" value="1 site, No reported glycans"/>
</dbReference>
<dbReference type="GlyGen" id="A4D2G3">
    <property type="glycosylation" value="2 sites, 1 O-linked glycan (1 site)"/>
</dbReference>
<dbReference type="iPTMnet" id="A4D2G3"/>
<dbReference type="PhosphoSitePlus" id="A4D2G3"/>
<dbReference type="BioMuta" id="OR2A25"/>
<dbReference type="MassIVE" id="A4D2G3"/>
<dbReference type="PaxDb" id="9606-ENSP00000386167"/>
<dbReference type="PeptideAtlas" id="A4D2G3"/>
<dbReference type="Antibodypedia" id="64076">
    <property type="antibodies" value="60 antibodies from 17 providers"/>
</dbReference>
<dbReference type="DNASU" id="392138"/>
<dbReference type="Ensembl" id="ENST00000408898.2">
    <property type="protein sequence ID" value="ENSP00000386167.2"/>
    <property type="gene ID" value="ENSG00000221933.3"/>
</dbReference>
<dbReference type="Ensembl" id="ENST00000641441.1">
    <property type="protein sequence ID" value="ENSP00000493159.1"/>
    <property type="gene ID" value="ENSG00000221933.3"/>
</dbReference>
<dbReference type="Ensembl" id="ENST00000641663.1">
    <property type="protein sequence ID" value="ENSP00000493343.1"/>
    <property type="gene ID" value="ENSG00000221933.3"/>
</dbReference>
<dbReference type="GeneID" id="392138"/>
<dbReference type="KEGG" id="hsa:392138"/>
<dbReference type="MANE-Select" id="ENST00000641663.1">
    <property type="protein sequence ID" value="ENSP00000493343.1"/>
    <property type="RefSeq nucleotide sequence ID" value="NM_001386096.1"/>
    <property type="RefSeq protein sequence ID" value="NP_001373025.1"/>
</dbReference>
<dbReference type="UCSC" id="uc011ktx.3">
    <property type="organism name" value="human"/>
</dbReference>
<dbReference type="AGR" id="HGNC:19562"/>
<dbReference type="CTD" id="392138"/>
<dbReference type="GeneCards" id="OR2A25"/>
<dbReference type="HGNC" id="HGNC:19562">
    <property type="gene designation" value="OR2A25"/>
</dbReference>
<dbReference type="HPA" id="ENSG00000221933">
    <property type="expression patterns" value="Not detected"/>
</dbReference>
<dbReference type="neXtProt" id="NX_A4D2G3"/>
<dbReference type="PharmGKB" id="PA134892120"/>
<dbReference type="VEuPathDB" id="HostDB:ENSG00000221933"/>
<dbReference type="eggNOG" id="ENOG502SM15">
    <property type="taxonomic scope" value="Eukaryota"/>
</dbReference>
<dbReference type="GeneTree" id="ENSGT00940000161677"/>
<dbReference type="HOGENOM" id="CLU_012526_1_2_1"/>
<dbReference type="InParanoid" id="A4D2G3"/>
<dbReference type="OMA" id="HINETMV"/>
<dbReference type="OrthoDB" id="6147321at2759"/>
<dbReference type="PAN-GO" id="A4D2G3">
    <property type="GO annotations" value="4 GO annotations based on evolutionary models"/>
</dbReference>
<dbReference type="PhylomeDB" id="A4D2G3"/>
<dbReference type="TreeFam" id="TF337251"/>
<dbReference type="PathwayCommons" id="A4D2G3"/>
<dbReference type="Reactome" id="R-HSA-381753">
    <property type="pathway name" value="Olfactory Signaling Pathway"/>
</dbReference>
<dbReference type="Reactome" id="R-HSA-9752946">
    <property type="pathway name" value="Expression and translocation of olfactory receptors"/>
</dbReference>
<dbReference type="BioGRID-ORCS" id="392138">
    <property type="hits" value="15 hits in 735 CRISPR screens"/>
</dbReference>
<dbReference type="GenomeRNAi" id="392138"/>
<dbReference type="Pharos" id="A4D2G3">
    <property type="development level" value="Tdark"/>
</dbReference>
<dbReference type="PRO" id="PR:A4D2G3"/>
<dbReference type="Proteomes" id="UP000005640">
    <property type="component" value="Chromosome 7"/>
</dbReference>
<dbReference type="RNAct" id="A4D2G3">
    <property type="molecule type" value="protein"/>
</dbReference>
<dbReference type="Bgee" id="ENSG00000221933">
    <property type="expression patterns" value="Expressed in apex of heart and 2 other cell types or tissues"/>
</dbReference>
<dbReference type="ExpressionAtlas" id="A4D2G3">
    <property type="expression patterns" value="baseline and differential"/>
</dbReference>
<dbReference type="GO" id="GO:0016020">
    <property type="term" value="C:membrane"/>
    <property type="evidence" value="ECO:0000318"/>
    <property type="project" value="GO_Central"/>
</dbReference>
<dbReference type="GO" id="GO:0005886">
    <property type="term" value="C:plasma membrane"/>
    <property type="evidence" value="ECO:0000304"/>
    <property type="project" value="Reactome"/>
</dbReference>
<dbReference type="GO" id="GO:0004930">
    <property type="term" value="F:G protein-coupled receptor activity"/>
    <property type="evidence" value="ECO:0007669"/>
    <property type="project" value="UniProtKB-KW"/>
</dbReference>
<dbReference type="GO" id="GO:0005549">
    <property type="term" value="F:odorant binding"/>
    <property type="evidence" value="ECO:0000318"/>
    <property type="project" value="GO_Central"/>
</dbReference>
<dbReference type="GO" id="GO:0004984">
    <property type="term" value="F:olfactory receptor activity"/>
    <property type="evidence" value="ECO:0000318"/>
    <property type="project" value="GO_Central"/>
</dbReference>
<dbReference type="GO" id="GO:0050911">
    <property type="term" value="P:detection of chemical stimulus involved in sensory perception of smell"/>
    <property type="evidence" value="ECO:0000318"/>
    <property type="project" value="GO_Central"/>
</dbReference>
<dbReference type="CDD" id="cd15420">
    <property type="entry name" value="7tmA_OR2A-like"/>
    <property type="match status" value="1"/>
</dbReference>
<dbReference type="FunFam" id="1.10.1220.70:FF:000001">
    <property type="entry name" value="Olfactory receptor"/>
    <property type="match status" value="1"/>
</dbReference>
<dbReference type="FunFam" id="1.20.1070.10:FF:000008">
    <property type="entry name" value="Olfactory receptor"/>
    <property type="match status" value="1"/>
</dbReference>
<dbReference type="Gene3D" id="1.20.1070.10">
    <property type="entry name" value="Rhodopsin 7-helix transmembrane proteins"/>
    <property type="match status" value="1"/>
</dbReference>
<dbReference type="InterPro" id="IPR000276">
    <property type="entry name" value="GPCR_Rhodpsn"/>
</dbReference>
<dbReference type="InterPro" id="IPR017452">
    <property type="entry name" value="GPCR_Rhodpsn_7TM"/>
</dbReference>
<dbReference type="InterPro" id="IPR000725">
    <property type="entry name" value="Olfact_rcpt"/>
</dbReference>
<dbReference type="PANTHER" id="PTHR26453">
    <property type="entry name" value="OLFACTORY RECEPTOR"/>
    <property type="match status" value="1"/>
</dbReference>
<dbReference type="Pfam" id="PF13853">
    <property type="entry name" value="7tm_4"/>
    <property type="match status" value="1"/>
</dbReference>
<dbReference type="PRINTS" id="PR00237">
    <property type="entry name" value="GPCRRHODOPSN"/>
</dbReference>
<dbReference type="PRINTS" id="PR00245">
    <property type="entry name" value="OLFACTORYR"/>
</dbReference>
<dbReference type="SUPFAM" id="SSF81321">
    <property type="entry name" value="Family A G protein-coupled receptor-like"/>
    <property type="match status" value="1"/>
</dbReference>
<dbReference type="PROSITE" id="PS00237">
    <property type="entry name" value="G_PROTEIN_RECEP_F1_1"/>
    <property type="match status" value="1"/>
</dbReference>
<dbReference type="PROSITE" id="PS50262">
    <property type="entry name" value="G_PROTEIN_RECEP_F1_2"/>
    <property type="match status" value="1"/>
</dbReference>
<keyword id="KW-1003">Cell membrane</keyword>
<keyword id="KW-1015">Disulfide bond</keyword>
<keyword id="KW-0297">G-protein coupled receptor</keyword>
<keyword id="KW-0325">Glycoprotein</keyword>
<keyword id="KW-0472">Membrane</keyword>
<keyword id="KW-0552">Olfaction</keyword>
<keyword id="KW-0675">Receptor</keyword>
<keyword id="KW-1185">Reference proteome</keyword>
<keyword id="KW-0716">Sensory transduction</keyword>
<keyword id="KW-0807">Transducer</keyword>
<keyword id="KW-0812">Transmembrane</keyword>
<keyword id="KW-1133">Transmembrane helix</keyword>
<comment type="function">
    <text evidence="4">Odorant receptor.</text>
</comment>
<comment type="subcellular location">
    <subcellularLocation>
        <location>Cell membrane</location>
        <topology>Multi-pass membrane protein</topology>
    </subcellularLocation>
</comment>
<comment type="similarity">
    <text evidence="2">Belongs to the G-protein coupled receptor 1 family.</text>
</comment>
<comment type="online information" name="Human Olfactory Receptor Data Exploratorium (HORDE)">
    <link uri="http://genome.weizmann.ac.il/horde/card/index/symbol:OR2A25"/>
</comment>
<sequence>MGGNQTSITEFLLLGFPIGPRIQMLLFGLFSLFYIFILLGNGTILGLISLDSRLHTPMYFFLSHLAVVDIACACSTVPQMLVNLLHPAKPISFAGCMTQMFLFLSFAHTECLLLVVMSYDRYVAICHPLRYSTIMTWKVCITLALTSWILGVLLALVHLVLLLPLSFCGPQKLNHFFCEIMAVLKLACADTHINEVMVLAGAVSVLVGAFFSTVISYVHILCAILKIQSGEGCQKAFSICSSHLCVVGLFYGTAIIMYVEPQYESPKEQKKYLLLFHSLFNPMLNPLIYSLRNKEVQGTLKRMLEKKRTS</sequence>
<protein>
    <recommendedName>
        <fullName>Olfactory receptor 2A25</fullName>
    </recommendedName>
    <alternativeName>
        <fullName>Olfactory receptor 2A27</fullName>
    </alternativeName>
</protein>